<comment type="similarity">
    <text evidence="1">Belongs to the bacterial ribosomal protein bL36 family.</text>
</comment>
<name>RL36_BORBR</name>
<accession>Q7WRA1</accession>
<organism>
    <name type="scientific">Bordetella bronchiseptica (strain ATCC BAA-588 / NCTC 13252 / RB50)</name>
    <name type="common">Alcaligenes bronchisepticus</name>
    <dbReference type="NCBI Taxonomy" id="257310"/>
    <lineage>
        <taxon>Bacteria</taxon>
        <taxon>Pseudomonadati</taxon>
        <taxon>Pseudomonadota</taxon>
        <taxon>Betaproteobacteria</taxon>
        <taxon>Burkholderiales</taxon>
        <taxon>Alcaligenaceae</taxon>
        <taxon>Bordetella</taxon>
    </lineage>
</organism>
<evidence type="ECO:0000255" key="1">
    <source>
        <dbReference type="HAMAP-Rule" id="MF_00251"/>
    </source>
</evidence>
<evidence type="ECO:0000305" key="2"/>
<keyword id="KW-0687">Ribonucleoprotein</keyword>
<keyword id="KW-0689">Ribosomal protein</keyword>
<reference key="1">
    <citation type="journal article" date="2003" name="Nat. Genet.">
        <title>Comparative analysis of the genome sequences of Bordetella pertussis, Bordetella parapertussis and Bordetella bronchiseptica.</title>
        <authorList>
            <person name="Parkhill J."/>
            <person name="Sebaihia M."/>
            <person name="Preston A."/>
            <person name="Murphy L.D."/>
            <person name="Thomson N.R."/>
            <person name="Harris D.E."/>
            <person name="Holden M.T.G."/>
            <person name="Churcher C.M."/>
            <person name="Bentley S.D."/>
            <person name="Mungall K.L."/>
            <person name="Cerdeno-Tarraga A.-M."/>
            <person name="Temple L."/>
            <person name="James K.D."/>
            <person name="Harris B."/>
            <person name="Quail M.A."/>
            <person name="Achtman M."/>
            <person name="Atkin R."/>
            <person name="Baker S."/>
            <person name="Basham D."/>
            <person name="Bason N."/>
            <person name="Cherevach I."/>
            <person name="Chillingworth T."/>
            <person name="Collins M."/>
            <person name="Cronin A."/>
            <person name="Davis P."/>
            <person name="Doggett J."/>
            <person name="Feltwell T."/>
            <person name="Goble A."/>
            <person name="Hamlin N."/>
            <person name="Hauser H."/>
            <person name="Holroyd S."/>
            <person name="Jagels K."/>
            <person name="Leather S."/>
            <person name="Moule S."/>
            <person name="Norberczak H."/>
            <person name="O'Neil S."/>
            <person name="Ormond D."/>
            <person name="Price C."/>
            <person name="Rabbinowitsch E."/>
            <person name="Rutter S."/>
            <person name="Sanders M."/>
            <person name="Saunders D."/>
            <person name="Seeger K."/>
            <person name="Sharp S."/>
            <person name="Simmonds M."/>
            <person name="Skelton J."/>
            <person name="Squares R."/>
            <person name="Squares S."/>
            <person name="Stevens K."/>
            <person name="Unwin L."/>
            <person name="Whitehead S."/>
            <person name="Barrell B.G."/>
            <person name="Maskell D.J."/>
        </authorList>
    </citation>
    <scope>NUCLEOTIDE SEQUENCE [LARGE SCALE GENOMIC DNA]</scope>
    <source>
        <strain>ATCC BAA-588 / NCTC 13252 / RB50</strain>
    </source>
</reference>
<protein>
    <recommendedName>
        <fullName evidence="1">Large ribosomal subunit protein bL36</fullName>
    </recommendedName>
    <alternativeName>
        <fullName evidence="2">50S ribosomal protein L36</fullName>
    </alternativeName>
</protein>
<dbReference type="EMBL" id="BX640437">
    <property type="protein sequence ID" value="CAE30555.1"/>
    <property type="molecule type" value="Genomic_DNA"/>
</dbReference>
<dbReference type="RefSeq" id="WP_003806928.1">
    <property type="nucleotide sequence ID" value="NC_002927.3"/>
</dbReference>
<dbReference type="SMR" id="Q7WRA1"/>
<dbReference type="GeneID" id="94357819"/>
<dbReference type="KEGG" id="bbr:BB0053"/>
<dbReference type="eggNOG" id="COG0257">
    <property type="taxonomic scope" value="Bacteria"/>
</dbReference>
<dbReference type="HOGENOM" id="CLU_135723_6_2_4"/>
<dbReference type="Proteomes" id="UP000001027">
    <property type="component" value="Chromosome"/>
</dbReference>
<dbReference type="GO" id="GO:0005737">
    <property type="term" value="C:cytoplasm"/>
    <property type="evidence" value="ECO:0007669"/>
    <property type="project" value="UniProtKB-ARBA"/>
</dbReference>
<dbReference type="GO" id="GO:1990904">
    <property type="term" value="C:ribonucleoprotein complex"/>
    <property type="evidence" value="ECO:0007669"/>
    <property type="project" value="UniProtKB-KW"/>
</dbReference>
<dbReference type="GO" id="GO:0005840">
    <property type="term" value="C:ribosome"/>
    <property type="evidence" value="ECO:0007669"/>
    <property type="project" value="UniProtKB-KW"/>
</dbReference>
<dbReference type="GO" id="GO:0003735">
    <property type="term" value="F:structural constituent of ribosome"/>
    <property type="evidence" value="ECO:0007669"/>
    <property type="project" value="InterPro"/>
</dbReference>
<dbReference type="GO" id="GO:0006412">
    <property type="term" value="P:translation"/>
    <property type="evidence" value="ECO:0007669"/>
    <property type="project" value="UniProtKB-UniRule"/>
</dbReference>
<dbReference type="HAMAP" id="MF_00251">
    <property type="entry name" value="Ribosomal_bL36"/>
    <property type="match status" value="1"/>
</dbReference>
<dbReference type="InterPro" id="IPR000473">
    <property type="entry name" value="Ribosomal_bL36"/>
</dbReference>
<dbReference type="InterPro" id="IPR035977">
    <property type="entry name" value="Ribosomal_bL36_sp"/>
</dbReference>
<dbReference type="NCBIfam" id="TIGR01022">
    <property type="entry name" value="rpmJ_bact"/>
    <property type="match status" value="1"/>
</dbReference>
<dbReference type="PANTHER" id="PTHR42888">
    <property type="entry name" value="50S RIBOSOMAL PROTEIN L36, CHLOROPLASTIC"/>
    <property type="match status" value="1"/>
</dbReference>
<dbReference type="PANTHER" id="PTHR42888:SF1">
    <property type="entry name" value="LARGE RIBOSOMAL SUBUNIT PROTEIN BL36C"/>
    <property type="match status" value="1"/>
</dbReference>
<dbReference type="Pfam" id="PF00444">
    <property type="entry name" value="Ribosomal_L36"/>
    <property type="match status" value="1"/>
</dbReference>
<dbReference type="SUPFAM" id="SSF57840">
    <property type="entry name" value="Ribosomal protein L36"/>
    <property type="match status" value="1"/>
</dbReference>
<dbReference type="PROSITE" id="PS00828">
    <property type="entry name" value="RIBOSOMAL_L36"/>
    <property type="match status" value="1"/>
</dbReference>
<gene>
    <name evidence="1" type="primary">rpmJ</name>
    <name type="ordered locus">BB0053</name>
</gene>
<sequence length="37" mass="4332">MKVMASVKRICRNCKVIKRHGVVRVICTDPRHKQRQG</sequence>
<feature type="chain" id="PRO_0000126153" description="Large ribosomal subunit protein bL36">
    <location>
        <begin position="1"/>
        <end position="37"/>
    </location>
</feature>
<proteinExistence type="inferred from homology"/>